<proteinExistence type="evidence at protein level"/>
<dbReference type="EMBL" id="AK291192">
    <property type="protein sequence ID" value="BAF83881.1"/>
    <property type="molecule type" value="mRNA"/>
</dbReference>
<dbReference type="EMBL" id="AL832079">
    <property type="status" value="NOT_ANNOTATED_CDS"/>
    <property type="molecule type" value="mRNA"/>
</dbReference>
<dbReference type="EMBL" id="AC066692">
    <property type="status" value="NOT_ANNOTATED_CDS"/>
    <property type="molecule type" value="Genomic_DNA"/>
</dbReference>
<dbReference type="EMBL" id="BC092484">
    <property type="protein sequence ID" value="AAH92484.1"/>
    <property type="molecule type" value="mRNA"/>
</dbReference>
<dbReference type="EMBL" id="BC093681">
    <property type="protein sequence ID" value="AAH93681.1"/>
    <property type="molecule type" value="mRNA"/>
</dbReference>
<dbReference type="EMBL" id="BC111997">
    <property type="protein sequence ID" value="AAI11998.1"/>
    <property type="molecule type" value="mRNA"/>
</dbReference>
<dbReference type="EMBL" id="BC143298">
    <property type="protein sequence ID" value="AAI43299.1"/>
    <property type="molecule type" value="mRNA"/>
</dbReference>
<dbReference type="CCDS" id="CCDS1704.1">
    <molecule id="P68543-1"/>
</dbReference>
<dbReference type="RefSeq" id="NP_859064.2">
    <molecule id="P68543-1"/>
    <property type="nucleotide sequence ID" value="NM_181713.3"/>
</dbReference>
<dbReference type="RefSeq" id="XP_005264223.1">
    <molecule id="P68543-1"/>
    <property type="nucleotide sequence ID" value="XM_005264166.6"/>
</dbReference>
<dbReference type="RefSeq" id="XP_005264224.1">
    <molecule id="P68543-1"/>
    <property type="nucleotide sequence ID" value="XM_005264167.6"/>
</dbReference>
<dbReference type="RefSeq" id="XP_005264225.1">
    <molecule id="P68543-1"/>
    <property type="nucleotide sequence ID" value="XM_005264168.6"/>
</dbReference>
<dbReference type="RefSeq" id="XP_005264226.1">
    <molecule id="P68543-1"/>
    <property type="nucleotide sequence ID" value="XM_005264169.5"/>
</dbReference>
<dbReference type="RefSeq" id="XP_011530935.1">
    <molecule id="P68543-1"/>
    <property type="nucleotide sequence ID" value="XM_011532633.4"/>
</dbReference>
<dbReference type="RefSeq" id="XP_047299535.1">
    <molecule id="P68543-1"/>
    <property type="nucleotide sequence ID" value="XM_047443579.1"/>
</dbReference>
<dbReference type="RefSeq" id="XP_047299536.1">
    <molecule id="P68543-1"/>
    <property type="nucleotide sequence ID" value="XM_047443580.1"/>
</dbReference>
<dbReference type="RefSeq" id="XP_054196839.1">
    <molecule id="P68543-1"/>
    <property type="nucleotide sequence ID" value="XM_054340864.1"/>
</dbReference>
<dbReference type="RefSeq" id="XP_054196840.1">
    <molecule id="P68543-1"/>
    <property type="nucleotide sequence ID" value="XM_054340865.1"/>
</dbReference>
<dbReference type="RefSeq" id="XP_054196841.1">
    <molecule id="P68543-1"/>
    <property type="nucleotide sequence ID" value="XM_054340866.1"/>
</dbReference>
<dbReference type="RefSeq" id="XP_054196842.1">
    <molecule id="P68543-1"/>
    <property type="nucleotide sequence ID" value="XM_054340867.1"/>
</dbReference>
<dbReference type="RefSeq" id="XP_054196843.1">
    <molecule id="P68543-1"/>
    <property type="nucleotide sequence ID" value="XM_054340868.1"/>
</dbReference>
<dbReference type="RefSeq" id="XP_054196844.1">
    <molecule id="P68543-1"/>
    <property type="nucleotide sequence ID" value="XM_054340869.1"/>
</dbReference>
<dbReference type="RefSeq" id="XP_054196845.1">
    <molecule id="P68543-1"/>
    <property type="nucleotide sequence ID" value="XM_054340870.1"/>
</dbReference>
<dbReference type="SMR" id="P68543"/>
<dbReference type="BioGRID" id="127913">
    <property type="interactions" value="28"/>
</dbReference>
<dbReference type="ComplexPortal" id="CPX-8124">
    <property type="entry name" value="VCP-UBXN2A AAA ATPase complex"/>
</dbReference>
<dbReference type="FunCoup" id="P68543">
    <property type="interactions" value="1705"/>
</dbReference>
<dbReference type="IntAct" id="P68543">
    <property type="interactions" value="19"/>
</dbReference>
<dbReference type="MINT" id="P68543"/>
<dbReference type="STRING" id="9606.ENSP00000312107"/>
<dbReference type="iPTMnet" id="P68543"/>
<dbReference type="PhosphoSitePlus" id="P68543"/>
<dbReference type="BioMuta" id="UBXN2A"/>
<dbReference type="DMDM" id="55976658"/>
<dbReference type="jPOST" id="P68543"/>
<dbReference type="MassIVE" id="P68543"/>
<dbReference type="PaxDb" id="9606-ENSP00000312107"/>
<dbReference type="PeptideAtlas" id="P68543"/>
<dbReference type="ProteomicsDB" id="57542">
    <molecule id="P68543-1"/>
</dbReference>
<dbReference type="ProteomicsDB" id="7186"/>
<dbReference type="Pumba" id="P68543"/>
<dbReference type="Antibodypedia" id="58573">
    <property type="antibodies" value="94 antibodies from 18 providers"/>
</dbReference>
<dbReference type="DNASU" id="165324"/>
<dbReference type="Ensembl" id="ENST00000309033.5">
    <molecule id="P68543-1"/>
    <property type="protein sequence ID" value="ENSP00000312107.4"/>
    <property type="gene ID" value="ENSG00000173960.14"/>
</dbReference>
<dbReference type="Ensembl" id="ENST00000404924.5">
    <molecule id="P68543-1"/>
    <property type="protein sequence ID" value="ENSP00000385525.1"/>
    <property type="gene ID" value="ENSG00000173960.14"/>
</dbReference>
<dbReference type="GeneID" id="165324"/>
<dbReference type="KEGG" id="hsa:165324"/>
<dbReference type="MANE-Select" id="ENST00000309033.5">
    <property type="protein sequence ID" value="ENSP00000312107.4"/>
    <property type="RefSeq nucleotide sequence ID" value="NM_181713.4"/>
    <property type="RefSeq protein sequence ID" value="NP_859064.2"/>
</dbReference>
<dbReference type="UCSC" id="uc002ren.4">
    <molecule id="P68543-1"/>
    <property type="organism name" value="human"/>
</dbReference>
<dbReference type="AGR" id="HGNC:27265"/>
<dbReference type="CTD" id="165324"/>
<dbReference type="DisGeNET" id="165324"/>
<dbReference type="GeneCards" id="UBXN2A"/>
<dbReference type="HGNC" id="HGNC:27265">
    <property type="gene designation" value="UBXN2A"/>
</dbReference>
<dbReference type="HPA" id="ENSG00000173960">
    <property type="expression patterns" value="Low tissue specificity"/>
</dbReference>
<dbReference type="neXtProt" id="NX_P68543"/>
<dbReference type="OpenTargets" id="ENSG00000173960"/>
<dbReference type="PharmGKB" id="PA162408375"/>
<dbReference type="VEuPathDB" id="HostDB:ENSG00000173960"/>
<dbReference type="eggNOG" id="KOG2086">
    <property type="taxonomic scope" value="Eukaryota"/>
</dbReference>
<dbReference type="GeneTree" id="ENSGT00520000055567"/>
<dbReference type="HOGENOM" id="CLU_029402_3_1_1"/>
<dbReference type="InParanoid" id="P68543"/>
<dbReference type="OMA" id="SRCQRSC"/>
<dbReference type="OrthoDB" id="25887at2759"/>
<dbReference type="PAN-GO" id="P68543">
    <property type="GO annotations" value="8 GO annotations based on evolutionary models"/>
</dbReference>
<dbReference type="PhylomeDB" id="P68543"/>
<dbReference type="TreeFam" id="TF312973"/>
<dbReference type="PathwayCommons" id="P68543"/>
<dbReference type="SignaLink" id="P68543"/>
<dbReference type="BioGRID-ORCS" id="165324">
    <property type="hits" value="13 hits in 1151 CRISPR screens"/>
</dbReference>
<dbReference type="ChiTaRS" id="UBXN2A">
    <property type="organism name" value="human"/>
</dbReference>
<dbReference type="GenomeRNAi" id="165324"/>
<dbReference type="Pharos" id="P68543">
    <property type="development level" value="Tbio"/>
</dbReference>
<dbReference type="PRO" id="PR:P68543"/>
<dbReference type="Proteomes" id="UP000005640">
    <property type="component" value="Chromosome 2"/>
</dbReference>
<dbReference type="RNAct" id="P68543">
    <property type="molecule type" value="protein"/>
</dbReference>
<dbReference type="Bgee" id="ENSG00000173960">
    <property type="expression patterns" value="Expressed in buccal mucosa cell and 197 other cell types or tissues"/>
</dbReference>
<dbReference type="GO" id="GO:0005801">
    <property type="term" value="C:cis-Golgi network"/>
    <property type="evidence" value="ECO:0007669"/>
    <property type="project" value="Ensembl"/>
</dbReference>
<dbReference type="GO" id="GO:0005737">
    <property type="term" value="C:cytoplasm"/>
    <property type="evidence" value="ECO:0000314"/>
    <property type="project" value="UniProtKB"/>
</dbReference>
<dbReference type="GO" id="GO:0005829">
    <property type="term" value="C:cytosol"/>
    <property type="evidence" value="ECO:0000318"/>
    <property type="project" value="GO_Central"/>
</dbReference>
<dbReference type="GO" id="GO:0030425">
    <property type="term" value="C:dendrite"/>
    <property type="evidence" value="ECO:0007669"/>
    <property type="project" value="UniProtKB-SubCell"/>
</dbReference>
<dbReference type="GO" id="GO:0005783">
    <property type="term" value="C:endoplasmic reticulum"/>
    <property type="evidence" value="ECO:0000250"/>
    <property type="project" value="UniProtKB"/>
</dbReference>
<dbReference type="GO" id="GO:0005794">
    <property type="term" value="C:Golgi apparatus"/>
    <property type="evidence" value="ECO:0000250"/>
    <property type="project" value="UniProtKB"/>
</dbReference>
<dbReference type="GO" id="GO:0005634">
    <property type="term" value="C:nucleus"/>
    <property type="evidence" value="ECO:0000314"/>
    <property type="project" value="UniProtKB"/>
</dbReference>
<dbReference type="GO" id="GO:0043204">
    <property type="term" value="C:perikaryon"/>
    <property type="evidence" value="ECO:0007669"/>
    <property type="project" value="UniProtKB-SubCell"/>
</dbReference>
<dbReference type="GO" id="GO:0033130">
    <property type="term" value="F:acetylcholine receptor binding"/>
    <property type="evidence" value="ECO:0007669"/>
    <property type="project" value="Ensembl"/>
</dbReference>
<dbReference type="GO" id="GO:0043130">
    <property type="term" value="F:ubiquitin binding"/>
    <property type="evidence" value="ECO:0000318"/>
    <property type="project" value="GO_Central"/>
</dbReference>
<dbReference type="GO" id="GO:0000045">
    <property type="term" value="P:autophagosome assembly"/>
    <property type="evidence" value="ECO:0000318"/>
    <property type="project" value="GO_Central"/>
</dbReference>
<dbReference type="GO" id="GO:1990830">
    <property type="term" value="P:cellular response to leukemia inhibitory factor"/>
    <property type="evidence" value="ECO:0007669"/>
    <property type="project" value="Ensembl"/>
</dbReference>
<dbReference type="GO" id="GO:0007030">
    <property type="term" value="P:Golgi organization"/>
    <property type="evidence" value="ECO:0000318"/>
    <property type="project" value="GO_Central"/>
</dbReference>
<dbReference type="GO" id="GO:0061025">
    <property type="term" value="P:membrane fusion"/>
    <property type="evidence" value="ECO:0000318"/>
    <property type="project" value="GO_Central"/>
</dbReference>
<dbReference type="GO" id="GO:1904293">
    <property type="term" value="P:negative regulation of ERAD pathway"/>
    <property type="evidence" value="ECO:0000315"/>
    <property type="project" value="UniProtKB"/>
</dbReference>
<dbReference type="GO" id="GO:0045861">
    <property type="term" value="P:negative regulation of proteolysis"/>
    <property type="evidence" value="ECO:0000315"/>
    <property type="project" value="UniProtKB"/>
</dbReference>
<dbReference type="GO" id="GO:0031468">
    <property type="term" value="P:nuclear membrane reassembly"/>
    <property type="evidence" value="ECO:0000318"/>
    <property type="project" value="GO_Central"/>
</dbReference>
<dbReference type="GO" id="GO:0045732">
    <property type="term" value="P:positive regulation of protein catabolic process"/>
    <property type="evidence" value="ECO:0000315"/>
    <property type="project" value="UniProtKB"/>
</dbReference>
<dbReference type="GO" id="GO:0043161">
    <property type="term" value="P:proteasome-mediated ubiquitin-dependent protein catabolic process"/>
    <property type="evidence" value="ECO:0000318"/>
    <property type="project" value="GO_Central"/>
</dbReference>
<dbReference type="GO" id="GO:0031396">
    <property type="term" value="P:regulation of protein ubiquitination"/>
    <property type="evidence" value="ECO:0007669"/>
    <property type="project" value="Ensembl"/>
</dbReference>
<dbReference type="CDD" id="cd17160">
    <property type="entry name" value="UBX_UBXN2A"/>
    <property type="match status" value="1"/>
</dbReference>
<dbReference type="FunFam" id="3.10.20.90:FF:000164">
    <property type="entry name" value="UBX domain-containing protein 2A"/>
    <property type="match status" value="1"/>
</dbReference>
<dbReference type="FunFam" id="3.30.420.210:FF:000004">
    <property type="entry name" value="UBX domain-containing protein 2A"/>
    <property type="match status" value="1"/>
</dbReference>
<dbReference type="Gene3D" id="3.10.20.90">
    <property type="entry name" value="Phosphatidylinositol 3-kinase Catalytic Subunit, Chain A, domain 1"/>
    <property type="match status" value="1"/>
</dbReference>
<dbReference type="Gene3D" id="3.30.420.210">
    <property type="entry name" value="SEP domain"/>
    <property type="match status" value="1"/>
</dbReference>
<dbReference type="InterPro" id="IPR036241">
    <property type="entry name" value="NSFL1C_SEP_dom_sf"/>
</dbReference>
<dbReference type="InterPro" id="IPR012989">
    <property type="entry name" value="SEP_domain"/>
</dbReference>
<dbReference type="InterPro" id="IPR029071">
    <property type="entry name" value="Ubiquitin-like_domsf"/>
</dbReference>
<dbReference type="InterPro" id="IPR001012">
    <property type="entry name" value="UBX_dom"/>
</dbReference>
<dbReference type="PANTHER" id="PTHR23333">
    <property type="entry name" value="UBX DOMAIN CONTAINING PROTEIN"/>
    <property type="match status" value="1"/>
</dbReference>
<dbReference type="PANTHER" id="PTHR23333:SF16">
    <property type="entry name" value="UBX DOMAIN-CONTAINING PROTEIN 2A"/>
    <property type="match status" value="1"/>
</dbReference>
<dbReference type="Pfam" id="PF08059">
    <property type="entry name" value="SEP"/>
    <property type="match status" value="1"/>
</dbReference>
<dbReference type="Pfam" id="PF00789">
    <property type="entry name" value="UBX"/>
    <property type="match status" value="1"/>
</dbReference>
<dbReference type="SMART" id="SM00553">
    <property type="entry name" value="SEP"/>
    <property type="match status" value="1"/>
</dbReference>
<dbReference type="SMART" id="SM00166">
    <property type="entry name" value="UBX"/>
    <property type="match status" value="1"/>
</dbReference>
<dbReference type="SUPFAM" id="SSF102848">
    <property type="entry name" value="NSFL1 (p97 ATPase) cofactor p47, SEP domain"/>
    <property type="match status" value="1"/>
</dbReference>
<dbReference type="SUPFAM" id="SSF54236">
    <property type="entry name" value="Ubiquitin-like"/>
    <property type="match status" value="1"/>
</dbReference>
<dbReference type="PROSITE" id="PS51399">
    <property type="entry name" value="SEP"/>
    <property type="match status" value="1"/>
</dbReference>
<dbReference type="PROSITE" id="PS50033">
    <property type="entry name" value="UBX"/>
    <property type="match status" value="1"/>
</dbReference>
<organism>
    <name type="scientific">Homo sapiens</name>
    <name type="common">Human</name>
    <dbReference type="NCBI Taxonomy" id="9606"/>
    <lineage>
        <taxon>Eukaryota</taxon>
        <taxon>Metazoa</taxon>
        <taxon>Chordata</taxon>
        <taxon>Craniata</taxon>
        <taxon>Vertebrata</taxon>
        <taxon>Euteleostomi</taxon>
        <taxon>Mammalia</taxon>
        <taxon>Eutheria</taxon>
        <taxon>Euarchontoglires</taxon>
        <taxon>Primates</taxon>
        <taxon>Haplorrhini</taxon>
        <taxon>Catarrhini</taxon>
        <taxon>Hominidae</taxon>
        <taxon>Homo</taxon>
    </lineage>
</organism>
<comment type="function">
    <text evidence="1 4 5 6 7">Acts to repress the ubiquitination and subsequent endoplasmic reticulum-associated degradation of CHRNA3 by the STUB1-VCP-UBXN2A complex in cortical neurons (PubMed:26265139). Also acts to promote the translocation of CHRNA3 to the plasma membrane and subsequently increases plasma membrane acetylcholine-gated ion-channel activation (By similarity). Plays a role in the inhibition of STUB1-mediated TP53 degradation, via its interaction with HSPA9 which acts to inhibit TP53 binding to HSPA9 (PubMed:24625977, PubMed:26634371). Positively mediates the ubiquitination and proteosomal degradation of RICTOR, may thereby act as a negative regulator of the mTORC2 pathway (PubMed:37037900).</text>
</comment>
<comment type="subunit">
    <text evidence="4 5 6 7">Part of a complex composed of STUB1/CHIP, VCP/p97, CHRNA3, and UBXN2A that modulates the ubiquitination and endoplasmic reticulum-associated degradation (ERAD) of CHRNA3 (PubMed:26265139). Within the complex UBXN2A acts as a scaffold protein required for the interaction of CHRNA3 with VCP/p97, this interaction also inhibits CHRNA3 ubiquitination by STUB1/CHIP and subsequently ERAD (PubMed:26265139). Interacts (via SEP domain) with CHRNA3 and interacts (via UBX domain) with VCP/P97; these interactions are required for the interaction of CHRNA3 with the STUB1-VCP-UBXN2A complex (PubMed:26265139). Interacts with HSPA9/MOT-2 (via SBD domain); the interaction inhibits HSPA9/MOT-2 interaction with and degradation of p53, thereby promotes p53 translocation to the nucleus (PubMed:24625977, PubMed:26634371). Interacts with RICTOR (PubMed:37037900).</text>
</comment>
<comment type="interaction">
    <interactant intactId="EBI-1993668">
        <id>P68543</id>
    </interactant>
    <interactant intactId="EBI-749277">
        <id>Q96IM9</id>
        <label>DYDC2</label>
    </interactant>
    <organismsDiffer>false</organismsDiffer>
    <experiments>3</experiments>
</comment>
<comment type="interaction">
    <interactant intactId="EBI-1993668">
        <id>P68543</id>
    </interactant>
    <interactant intactId="EBI-1993899">
        <id>Q9BZV1</id>
        <label>UBXN6</label>
    </interactant>
    <organismsDiffer>false</organismsDiffer>
    <experiments>4</experiments>
</comment>
<comment type="interaction">
    <interactant intactId="EBI-1993668">
        <id>P68543</id>
    </interactant>
    <interactant intactId="EBI-355164">
        <id>P55072</id>
        <label>VCP</label>
    </interactant>
    <organismsDiffer>false</organismsDiffer>
    <experiments>20</experiments>
</comment>
<comment type="subcellular location">
    <subcellularLocation>
        <location evidence="1">Golgi apparatus</location>
    </subcellularLocation>
    <subcellularLocation>
        <location evidence="1">Endoplasmic reticulum</location>
    </subcellularLocation>
    <subcellularLocation>
        <location evidence="1">Perikaryon</location>
    </subcellularLocation>
    <subcellularLocation>
        <location evidence="1">Cell projection</location>
        <location evidence="1">Dendrite</location>
    </subcellularLocation>
    <subcellularLocation>
        <location evidence="4">Nucleus</location>
    </subcellularLocation>
    <subcellularLocation>
        <location evidence="4">Cytoplasm</location>
    </subcellularLocation>
    <text evidence="1">Expressed at the axon initial segment.</text>
</comment>
<comment type="alternative products">
    <event type="alternative splicing"/>
    <isoform>
        <id>P68543-1</id>
        <name>1</name>
        <sequence type="displayed"/>
    </isoform>
    <isoform>
        <id>P68543-2</id>
        <name>2</name>
        <sequence type="described" ref="VSP_056306"/>
    </isoform>
</comment>
<comment type="tissue specificity">
    <text evidence="7">Expressed in the colon (at protein level).</text>
</comment>
<comment type="PTM">
    <text evidence="1">Ubiquitinated.</text>
</comment>
<comment type="miscellaneous">
    <text evidence="4 7">Acts as a tumor suppressor in cancer cells via stabilization of TP53 and subsequent promotion of TP53-mediated apoptosis (PubMed:24625977). Acts as a tumor suppressor in colorectal cancer by repressing cell migration, growth, tumor dedifferentiation and cancer stem cell populations (PubMed:37037900). May act as a biomarker of positive survival outcome in both colon and rectal adenocarcinoma patients (PubMed:37037900).</text>
</comment>
<reference key="1">
    <citation type="journal article" date="2004" name="Nat. Genet.">
        <title>Complete sequencing and characterization of 21,243 full-length human cDNAs.</title>
        <authorList>
            <person name="Ota T."/>
            <person name="Suzuki Y."/>
            <person name="Nishikawa T."/>
            <person name="Otsuki T."/>
            <person name="Sugiyama T."/>
            <person name="Irie R."/>
            <person name="Wakamatsu A."/>
            <person name="Hayashi K."/>
            <person name="Sato H."/>
            <person name="Nagai K."/>
            <person name="Kimura K."/>
            <person name="Makita H."/>
            <person name="Sekine M."/>
            <person name="Obayashi M."/>
            <person name="Nishi T."/>
            <person name="Shibahara T."/>
            <person name="Tanaka T."/>
            <person name="Ishii S."/>
            <person name="Yamamoto J."/>
            <person name="Saito K."/>
            <person name="Kawai Y."/>
            <person name="Isono Y."/>
            <person name="Nakamura Y."/>
            <person name="Nagahari K."/>
            <person name="Murakami K."/>
            <person name="Yasuda T."/>
            <person name="Iwayanagi T."/>
            <person name="Wagatsuma M."/>
            <person name="Shiratori A."/>
            <person name="Sudo H."/>
            <person name="Hosoiri T."/>
            <person name="Kaku Y."/>
            <person name="Kodaira H."/>
            <person name="Kondo H."/>
            <person name="Sugawara M."/>
            <person name="Takahashi M."/>
            <person name="Kanda K."/>
            <person name="Yokoi T."/>
            <person name="Furuya T."/>
            <person name="Kikkawa E."/>
            <person name="Omura Y."/>
            <person name="Abe K."/>
            <person name="Kamihara K."/>
            <person name="Katsuta N."/>
            <person name="Sato K."/>
            <person name="Tanikawa M."/>
            <person name="Yamazaki M."/>
            <person name="Ninomiya K."/>
            <person name="Ishibashi T."/>
            <person name="Yamashita H."/>
            <person name="Murakawa K."/>
            <person name="Fujimori K."/>
            <person name="Tanai H."/>
            <person name="Kimata M."/>
            <person name="Watanabe M."/>
            <person name="Hiraoka S."/>
            <person name="Chiba Y."/>
            <person name="Ishida S."/>
            <person name="Ono Y."/>
            <person name="Takiguchi S."/>
            <person name="Watanabe S."/>
            <person name="Yosida M."/>
            <person name="Hotuta T."/>
            <person name="Kusano J."/>
            <person name="Kanehori K."/>
            <person name="Takahashi-Fujii A."/>
            <person name="Hara H."/>
            <person name="Tanase T.-O."/>
            <person name="Nomura Y."/>
            <person name="Togiya S."/>
            <person name="Komai F."/>
            <person name="Hara R."/>
            <person name="Takeuchi K."/>
            <person name="Arita M."/>
            <person name="Imose N."/>
            <person name="Musashino K."/>
            <person name="Yuuki H."/>
            <person name="Oshima A."/>
            <person name="Sasaki N."/>
            <person name="Aotsuka S."/>
            <person name="Yoshikawa Y."/>
            <person name="Matsunawa H."/>
            <person name="Ichihara T."/>
            <person name="Shiohata N."/>
            <person name="Sano S."/>
            <person name="Moriya S."/>
            <person name="Momiyama H."/>
            <person name="Satoh N."/>
            <person name="Takami S."/>
            <person name="Terashima Y."/>
            <person name="Suzuki O."/>
            <person name="Nakagawa S."/>
            <person name="Senoh A."/>
            <person name="Mizoguchi H."/>
            <person name="Goto Y."/>
            <person name="Shimizu F."/>
            <person name="Wakebe H."/>
            <person name="Hishigaki H."/>
            <person name="Watanabe T."/>
            <person name="Sugiyama A."/>
            <person name="Takemoto M."/>
            <person name="Kawakami B."/>
            <person name="Yamazaki M."/>
            <person name="Watanabe K."/>
            <person name="Kumagai A."/>
            <person name="Itakura S."/>
            <person name="Fukuzumi Y."/>
            <person name="Fujimori Y."/>
            <person name="Komiyama M."/>
            <person name="Tashiro H."/>
            <person name="Tanigami A."/>
            <person name="Fujiwara T."/>
            <person name="Ono T."/>
            <person name="Yamada K."/>
            <person name="Fujii Y."/>
            <person name="Ozaki K."/>
            <person name="Hirao M."/>
            <person name="Ohmori Y."/>
            <person name="Kawabata A."/>
            <person name="Hikiji T."/>
            <person name="Kobatake N."/>
            <person name="Inagaki H."/>
            <person name="Ikema Y."/>
            <person name="Okamoto S."/>
            <person name="Okitani R."/>
            <person name="Kawakami T."/>
            <person name="Noguchi S."/>
            <person name="Itoh T."/>
            <person name="Shigeta K."/>
            <person name="Senba T."/>
            <person name="Matsumura K."/>
            <person name="Nakajima Y."/>
            <person name="Mizuno T."/>
            <person name="Morinaga M."/>
            <person name="Sasaki M."/>
            <person name="Togashi T."/>
            <person name="Oyama M."/>
            <person name="Hata H."/>
            <person name="Watanabe M."/>
            <person name="Komatsu T."/>
            <person name="Mizushima-Sugano J."/>
            <person name="Satoh T."/>
            <person name="Shirai Y."/>
            <person name="Takahashi Y."/>
            <person name="Nakagawa K."/>
            <person name="Okumura K."/>
            <person name="Nagase T."/>
            <person name="Nomura N."/>
            <person name="Kikuchi H."/>
            <person name="Masuho Y."/>
            <person name="Yamashita R."/>
            <person name="Nakai K."/>
            <person name="Yada T."/>
            <person name="Nakamura Y."/>
            <person name="Ohara O."/>
            <person name="Isogai T."/>
            <person name="Sugano S."/>
        </authorList>
    </citation>
    <scope>NUCLEOTIDE SEQUENCE [LARGE SCALE MRNA] (ISOFORM 1)</scope>
</reference>
<reference key="2">
    <citation type="journal article" date="2007" name="BMC Genomics">
        <title>The full-ORF clone resource of the German cDNA consortium.</title>
        <authorList>
            <person name="Bechtel S."/>
            <person name="Rosenfelder H."/>
            <person name="Duda A."/>
            <person name="Schmidt C.P."/>
            <person name="Ernst U."/>
            <person name="Wellenreuther R."/>
            <person name="Mehrle A."/>
            <person name="Schuster C."/>
            <person name="Bahr A."/>
            <person name="Bloecker H."/>
            <person name="Heubner D."/>
            <person name="Hoerlein A."/>
            <person name="Michel G."/>
            <person name="Wedler H."/>
            <person name="Koehrer K."/>
            <person name="Ottenwaelder B."/>
            <person name="Poustka A."/>
            <person name="Wiemann S."/>
            <person name="Schupp I."/>
        </authorList>
    </citation>
    <scope>NUCLEOTIDE SEQUENCE [LARGE SCALE MRNA] (ISOFORM 1)</scope>
    <source>
        <tissue>Adipose tissue</tissue>
    </source>
</reference>
<reference key="3">
    <citation type="journal article" date="2005" name="Nature">
        <title>Generation and annotation of the DNA sequences of human chromosomes 2 and 4.</title>
        <authorList>
            <person name="Hillier L.W."/>
            <person name="Graves T.A."/>
            <person name="Fulton R.S."/>
            <person name="Fulton L.A."/>
            <person name="Pepin K.H."/>
            <person name="Minx P."/>
            <person name="Wagner-McPherson C."/>
            <person name="Layman D."/>
            <person name="Wylie K."/>
            <person name="Sekhon M."/>
            <person name="Becker M.C."/>
            <person name="Fewell G.A."/>
            <person name="Delehaunty K.D."/>
            <person name="Miner T.L."/>
            <person name="Nash W.E."/>
            <person name="Kremitzki C."/>
            <person name="Oddy L."/>
            <person name="Du H."/>
            <person name="Sun H."/>
            <person name="Bradshaw-Cordum H."/>
            <person name="Ali J."/>
            <person name="Carter J."/>
            <person name="Cordes M."/>
            <person name="Harris A."/>
            <person name="Isak A."/>
            <person name="van Brunt A."/>
            <person name="Nguyen C."/>
            <person name="Du F."/>
            <person name="Courtney L."/>
            <person name="Kalicki J."/>
            <person name="Ozersky P."/>
            <person name="Abbott S."/>
            <person name="Armstrong J."/>
            <person name="Belter E.A."/>
            <person name="Caruso L."/>
            <person name="Cedroni M."/>
            <person name="Cotton M."/>
            <person name="Davidson T."/>
            <person name="Desai A."/>
            <person name="Elliott G."/>
            <person name="Erb T."/>
            <person name="Fronick C."/>
            <person name="Gaige T."/>
            <person name="Haakenson W."/>
            <person name="Haglund K."/>
            <person name="Holmes A."/>
            <person name="Harkins R."/>
            <person name="Kim K."/>
            <person name="Kruchowski S.S."/>
            <person name="Strong C.M."/>
            <person name="Grewal N."/>
            <person name="Goyea E."/>
            <person name="Hou S."/>
            <person name="Levy A."/>
            <person name="Martinka S."/>
            <person name="Mead K."/>
            <person name="McLellan M.D."/>
            <person name="Meyer R."/>
            <person name="Randall-Maher J."/>
            <person name="Tomlinson C."/>
            <person name="Dauphin-Kohlberg S."/>
            <person name="Kozlowicz-Reilly A."/>
            <person name="Shah N."/>
            <person name="Swearengen-Shahid S."/>
            <person name="Snider J."/>
            <person name="Strong J.T."/>
            <person name="Thompson J."/>
            <person name="Yoakum M."/>
            <person name="Leonard S."/>
            <person name="Pearman C."/>
            <person name="Trani L."/>
            <person name="Radionenko M."/>
            <person name="Waligorski J.E."/>
            <person name="Wang C."/>
            <person name="Rock S.M."/>
            <person name="Tin-Wollam A.-M."/>
            <person name="Maupin R."/>
            <person name="Latreille P."/>
            <person name="Wendl M.C."/>
            <person name="Yang S.-P."/>
            <person name="Pohl C."/>
            <person name="Wallis J.W."/>
            <person name="Spieth J."/>
            <person name="Bieri T.A."/>
            <person name="Berkowicz N."/>
            <person name="Nelson J.O."/>
            <person name="Osborne J."/>
            <person name="Ding L."/>
            <person name="Meyer R."/>
            <person name="Sabo A."/>
            <person name="Shotland Y."/>
            <person name="Sinha P."/>
            <person name="Wohldmann P.E."/>
            <person name="Cook L.L."/>
            <person name="Hickenbotham M.T."/>
            <person name="Eldred J."/>
            <person name="Williams D."/>
            <person name="Jones T.A."/>
            <person name="She X."/>
            <person name="Ciccarelli F.D."/>
            <person name="Izaurralde E."/>
            <person name="Taylor J."/>
            <person name="Schmutz J."/>
            <person name="Myers R.M."/>
            <person name="Cox D.R."/>
            <person name="Huang X."/>
            <person name="McPherson J.D."/>
            <person name="Mardis E.R."/>
            <person name="Clifton S.W."/>
            <person name="Warren W.C."/>
            <person name="Chinwalla A.T."/>
            <person name="Eddy S.R."/>
            <person name="Marra M.A."/>
            <person name="Ovcharenko I."/>
            <person name="Furey T.S."/>
            <person name="Miller W."/>
            <person name="Eichler E.E."/>
            <person name="Bork P."/>
            <person name="Suyama M."/>
            <person name="Torrents D."/>
            <person name="Waterston R.H."/>
            <person name="Wilson R.K."/>
        </authorList>
    </citation>
    <scope>NUCLEOTIDE SEQUENCE [LARGE SCALE GENOMIC DNA]</scope>
</reference>
<reference key="4">
    <citation type="journal article" date="2004" name="Genome Res.">
        <title>The status, quality, and expansion of the NIH full-length cDNA project: the Mammalian Gene Collection (MGC).</title>
        <authorList>
            <consortium name="The MGC Project Team"/>
        </authorList>
    </citation>
    <scope>NUCLEOTIDE SEQUENCE [LARGE SCALE MRNA] (ISOFORMS 1 AND 2)</scope>
    <source>
        <tissue>Liver</tissue>
        <tissue>Placenta</tissue>
    </source>
</reference>
<reference key="5">
    <citation type="journal article" date="2014" name="Cell Death Dis.">
        <title>Ubiquitin-like (UBX)-domain-containing protein, UBXN2A, promotes cell death by interfering with the p53-Mortalin interactions in colon cancer cells.</title>
        <authorList>
            <person name="Sane S."/>
            <person name="Abdullah A."/>
            <person name="Boudreau D.A."/>
            <person name="Autenried R.K."/>
            <person name="Gupta B.K."/>
            <person name="Wang X."/>
            <person name="Wang H."/>
            <person name="Schlenker E.H."/>
            <person name="Zhang D."/>
            <person name="Telleria C."/>
            <person name="Huang L."/>
            <person name="Chauhan S.C."/>
            <person name="Rezvani K."/>
        </authorList>
    </citation>
    <scope>FUNCTION</scope>
    <scope>INTERACTION WITH HSPA9</scope>
    <scope>SUBCELLULAR LOCATION</scope>
</reference>
<reference key="6">
    <citation type="journal article" date="2015" name="Biochem. Pharmacol.">
        <title>UBXN2A regulates nicotinic receptor degradation by modulating the E3 ligase activity of CHIP.</title>
        <authorList>
            <person name="Teng Y."/>
            <person name="Rezvani K."/>
            <person name="De Biasi M."/>
        </authorList>
    </citation>
    <scope>FUNCTION</scope>
    <scope>IDENTIFICATION IN A COMPLEX WITH STUB1; VCP AND CHRNA3</scope>
    <scope>INTERACTION WITH CHRNA3</scope>
</reference>
<reference key="7">
    <citation type="journal article" date="2016" name="Cell Stress Chaperones">
        <title>Structural studies of UBXN2A and mortalin interaction and the putative role of silenced UBXN2A in preventing response to chemotherapy.</title>
        <authorList>
            <person name="Sane S."/>
            <person name="Abdullah A."/>
            <person name="Nelson M.E."/>
            <person name="Wang H."/>
            <person name="Chauhan S.C."/>
            <person name="Newton S.S."/>
            <person name="Rezvani K."/>
        </authorList>
    </citation>
    <scope>FUNCTION</scope>
    <scope>INTERACTION WITH HSPA9</scope>
</reference>
<reference key="8">
    <citation type="journal article" date="2023" name="Oncogene">
        <title>UBXN2A suppresses the Rictor-mTORC2 signaling pathway, an established tumorigenic pathway in human colorectal cancer.</title>
        <authorList>
            <person name="Sane S."/>
            <person name="Srinivasan R."/>
            <person name="Potts R.A."/>
            <person name="Eikanger M."/>
            <person name="Zagirova D."/>
            <person name="Freeling J."/>
            <person name="Reihe C.A."/>
            <person name="Antony R.M."/>
            <person name="Gupta B.K."/>
            <person name="Lynch D."/>
            <person name="Bleeker J."/>
            <person name="Turaihi H."/>
            <person name="Pillatzki A."/>
            <person name="Zhou W."/>
            <person name="Luo X."/>
            <person name="Linnebacher M."/>
            <person name="Agany D."/>
            <person name="Zohim E.G."/>
            <person name="Humphrey L.E."/>
            <person name="Black A.R."/>
            <person name="Rezvani K."/>
        </authorList>
    </citation>
    <scope>FUNCTION</scope>
    <scope>INTERACTION WITH RICTOR</scope>
    <scope>TISSUE SPECIFICITY</scope>
</reference>
<keyword id="KW-0025">Alternative splicing</keyword>
<keyword id="KW-0966">Cell projection</keyword>
<keyword id="KW-0963">Cytoplasm</keyword>
<keyword id="KW-0256">Endoplasmic reticulum</keyword>
<keyword id="KW-0333">Golgi apparatus</keyword>
<keyword id="KW-0539">Nucleus</keyword>
<keyword id="KW-1267">Proteomics identification</keyword>
<keyword id="KW-1185">Reference proteome</keyword>
<keyword id="KW-0832">Ubl conjugation</keyword>
<sequence length="259" mass="29278">MKDVDNLKSIKEEWVCETGSDNQPLGNNQQSNCEYFVDSLFEEAQKVSSKCVSPAEQKKQVDVNIKLWKNGFTVNDDFRSYSDGASQQFLNSIKKGELPSELQGIFDKEEVDVKVEDKKNEICLSTKPVFQPFSGQGHRLGSATPKIVSKAKNIEVENKNNLSAVPLNNLEPITNIQIWLANGKRIVQKFNITHRVSHIKDFIEKYQGSQRSPPFSLATALPVLRLLDETLTLEEADLQNAVIIQRLQKTASFRELSEH</sequence>
<gene>
    <name evidence="11" type="primary">UBXN2A</name>
    <name evidence="9" type="synonym">UBXD4</name>
</gene>
<evidence type="ECO:0000250" key="1">
    <source>
        <dbReference type="UniProtKB" id="Q99KJ0"/>
    </source>
</evidence>
<evidence type="ECO:0000255" key="2">
    <source>
        <dbReference type="PROSITE-ProRule" id="PRU00215"/>
    </source>
</evidence>
<evidence type="ECO:0000255" key="3">
    <source>
        <dbReference type="PROSITE-ProRule" id="PRU00732"/>
    </source>
</evidence>
<evidence type="ECO:0000269" key="4">
    <source>
    </source>
</evidence>
<evidence type="ECO:0000269" key="5">
    <source>
    </source>
</evidence>
<evidence type="ECO:0000269" key="6">
    <source>
    </source>
</evidence>
<evidence type="ECO:0000269" key="7">
    <source>
    </source>
</evidence>
<evidence type="ECO:0000303" key="8">
    <source>
    </source>
</evidence>
<evidence type="ECO:0000303" key="9">
    <source>
    </source>
</evidence>
<evidence type="ECO:0000305" key="10"/>
<evidence type="ECO:0000312" key="11">
    <source>
        <dbReference type="HGNC" id="HGNC:27265"/>
    </source>
</evidence>
<accession>P68543</accession>
<accession>A8K577</accession>
<accession>B7ZKP8</accession>
<accession>Q569G8</accession>
<protein>
    <recommendedName>
        <fullName evidence="10">UBX domain-containing protein 2A</fullName>
    </recommendedName>
    <alternativeName>
        <fullName evidence="11">UBX domain-containing protein 4</fullName>
    </alternativeName>
</protein>
<feature type="chain" id="PRO_0000211031" description="UBX domain-containing protein 2A">
    <location>
        <begin position="1"/>
        <end position="259"/>
    </location>
</feature>
<feature type="domain" description="SEP" evidence="3">
    <location>
        <begin position="60"/>
        <end position="124"/>
    </location>
</feature>
<feature type="domain" description="UBX" evidence="2">
    <location>
        <begin position="169"/>
        <end position="246"/>
    </location>
</feature>
<feature type="region of interest" description="Required for inhibition of CHRNA3 ubiquitination and translocation of CHRNA3 to the plasma membrane resulting in an increase in acetylcholine-gated nicotinic acetylcholine receptor currents" evidence="1">
    <location>
        <begin position="1"/>
        <end position="164"/>
    </location>
</feature>
<feature type="region of interest" description="Required for interaction with CHRNA3" evidence="5">
    <location>
        <begin position="1"/>
        <end position="151"/>
    </location>
</feature>
<feature type="region of interest" description="Required for interaction with VCP" evidence="5">
    <location>
        <begin position="167"/>
        <end position="259"/>
    </location>
</feature>
<feature type="splice variant" id="VSP_056306" description="In isoform 2." evidence="8">
    <location>
        <begin position="142"/>
        <end position="194"/>
    </location>
</feature>
<name>UBX2A_HUMAN</name>